<protein>
    <recommendedName>
        <fullName>Regulatory protein AriR</fullName>
    </recommendedName>
</protein>
<sequence length="88" mass="9694">MLEDTTIHNAITDKALASYFRSSGNLLEEESAVLGQAVTNLMLSGDNVNNKNIILSLIHSLETTSDILKADVIRKTLEIVLRYTADDM</sequence>
<organism>
    <name type="scientific">Escherichia coli (strain ATCC 8739 / DSM 1576 / NBRC 3972 / NCIMB 8545 / WDCM 00012 / Crooks)</name>
    <dbReference type="NCBI Taxonomy" id="481805"/>
    <lineage>
        <taxon>Bacteria</taxon>
        <taxon>Pseudomonadati</taxon>
        <taxon>Pseudomonadota</taxon>
        <taxon>Gammaproteobacteria</taxon>
        <taxon>Enterobacterales</taxon>
        <taxon>Enterobacteriaceae</taxon>
        <taxon>Escherichia</taxon>
    </lineage>
</organism>
<keyword id="KW-0238">DNA-binding</keyword>
<dbReference type="EMBL" id="CP000946">
    <property type="protein sequence ID" value="ACA78091.1"/>
    <property type="molecule type" value="Genomic_DNA"/>
</dbReference>
<dbReference type="RefSeq" id="WP_000888772.1">
    <property type="nucleotide sequence ID" value="NZ_MTFT01000032.1"/>
</dbReference>
<dbReference type="SMR" id="B1IUC4"/>
<dbReference type="GeneID" id="75203729"/>
<dbReference type="KEGG" id="ecl:EcolC_2460"/>
<dbReference type="HOGENOM" id="CLU_164045_1_0_6"/>
<dbReference type="GO" id="GO:0003677">
    <property type="term" value="F:DNA binding"/>
    <property type="evidence" value="ECO:0007669"/>
    <property type="project" value="UniProtKB-KW"/>
</dbReference>
<dbReference type="GO" id="GO:0071468">
    <property type="term" value="P:cellular response to acidic pH"/>
    <property type="evidence" value="ECO:0007669"/>
    <property type="project" value="InterPro"/>
</dbReference>
<dbReference type="FunFam" id="1.20.5.5260:FF:000001">
    <property type="entry name" value="Two-component-system connector protein AriR"/>
    <property type="match status" value="1"/>
</dbReference>
<dbReference type="Gene3D" id="1.20.5.5260">
    <property type="match status" value="1"/>
</dbReference>
<dbReference type="InterPro" id="IPR024753">
    <property type="entry name" value="AriR"/>
</dbReference>
<dbReference type="Pfam" id="PF10798">
    <property type="entry name" value="YmgB"/>
    <property type="match status" value="1"/>
</dbReference>
<evidence type="ECO:0000250" key="1"/>
<evidence type="ECO:0000305" key="2"/>
<accession>B1IUC4</accession>
<name>ARIR_ECOLC</name>
<comment type="function">
    <text evidence="1">Regulates expression of genes involved in acid-resistance and biofilm formation. May be a non-specific DNA-binding protein that binds genes and/or intergenic regions via a geometric recognition (By similarity).</text>
</comment>
<comment type="subunit">
    <text evidence="1">Homodimer.</text>
</comment>
<comment type="similarity">
    <text evidence="2">Belongs to the AriR family.</text>
</comment>
<reference key="1">
    <citation type="submission" date="2008-02" db="EMBL/GenBank/DDBJ databases">
        <title>Complete sequence of Escherichia coli C str. ATCC 8739.</title>
        <authorList>
            <person name="Copeland A."/>
            <person name="Lucas S."/>
            <person name="Lapidus A."/>
            <person name="Glavina del Rio T."/>
            <person name="Dalin E."/>
            <person name="Tice H."/>
            <person name="Bruce D."/>
            <person name="Goodwin L."/>
            <person name="Pitluck S."/>
            <person name="Kiss H."/>
            <person name="Brettin T."/>
            <person name="Detter J.C."/>
            <person name="Han C."/>
            <person name="Kuske C.R."/>
            <person name="Schmutz J."/>
            <person name="Larimer F."/>
            <person name="Land M."/>
            <person name="Hauser L."/>
            <person name="Kyrpides N."/>
            <person name="Mikhailova N."/>
            <person name="Ingram L."/>
            <person name="Richardson P."/>
        </authorList>
    </citation>
    <scope>NUCLEOTIDE SEQUENCE [LARGE SCALE GENOMIC DNA]</scope>
    <source>
        <strain>ATCC 8739 / DSM 1576 / NBRC 3972 / NCIMB 8545 / WDCM 00012 / Crooks</strain>
    </source>
</reference>
<proteinExistence type="inferred from homology"/>
<gene>
    <name type="primary">ariR</name>
    <name type="ordered locus">EcolC_2460</name>
</gene>
<feature type="chain" id="PRO_0000350555" description="Regulatory protein AriR">
    <location>
        <begin position="1"/>
        <end position="88"/>
    </location>
</feature>